<proteinExistence type="evidence at protein level"/>
<name>VA0D2_MOUSE</name>
<organism>
    <name type="scientific">Mus musculus</name>
    <name type="common">Mouse</name>
    <dbReference type="NCBI Taxonomy" id="10090"/>
    <lineage>
        <taxon>Eukaryota</taxon>
        <taxon>Metazoa</taxon>
        <taxon>Chordata</taxon>
        <taxon>Craniata</taxon>
        <taxon>Vertebrata</taxon>
        <taxon>Euteleostomi</taxon>
        <taxon>Mammalia</taxon>
        <taxon>Eutheria</taxon>
        <taxon>Euarchontoglires</taxon>
        <taxon>Glires</taxon>
        <taxon>Rodentia</taxon>
        <taxon>Myomorpha</taxon>
        <taxon>Muroidea</taxon>
        <taxon>Muridae</taxon>
        <taxon>Murinae</taxon>
        <taxon>Mus</taxon>
        <taxon>Mus</taxon>
    </lineage>
</organism>
<keyword id="KW-0375">Hydrogen ion transport</keyword>
<keyword id="KW-0406">Ion transport</keyword>
<keyword id="KW-1185">Reference proteome</keyword>
<keyword id="KW-0813">Transport</keyword>
<gene>
    <name type="primary">Atp6v0d2</name>
</gene>
<dbReference type="EMBL" id="AY145896">
    <property type="protein sequence ID" value="AAN61104.1"/>
    <property type="molecule type" value="mRNA"/>
</dbReference>
<dbReference type="EMBL" id="AB088358">
    <property type="protein sequence ID" value="BAC57951.1"/>
    <property type="molecule type" value="mRNA"/>
</dbReference>
<dbReference type="EMBL" id="AY517482">
    <property type="protein sequence ID" value="AAR99405.1"/>
    <property type="molecule type" value="mRNA"/>
</dbReference>
<dbReference type="EMBL" id="AK075745">
    <property type="protein sequence ID" value="BAC35925.1"/>
    <property type="molecule type" value="mRNA"/>
</dbReference>
<dbReference type="EMBL" id="AK089507">
    <property type="protein sequence ID" value="BAC40907.1"/>
    <property type="molecule type" value="mRNA"/>
</dbReference>
<dbReference type="EMBL" id="AK170072">
    <property type="protein sequence ID" value="BAE41545.1"/>
    <property type="molecule type" value="mRNA"/>
</dbReference>
<dbReference type="EMBL" id="AK170405">
    <property type="protein sequence ID" value="BAE41772.1"/>
    <property type="molecule type" value="mRNA"/>
</dbReference>
<dbReference type="EMBL" id="AK170578">
    <property type="protein sequence ID" value="BAE41890.1"/>
    <property type="molecule type" value="mRNA"/>
</dbReference>
<dbReference type="EMBL" id="AK170659">
    <property type="protein sequence ID" value="BAE41942.1"/>
    <property type="molecule type" value="mRNA"/>
</dbReference>
<dbReference type="EMBL" id="AL732527">
    <property type="status" value="NOT_ANNOTATED_CDS"/>
    <property type="molecule type" value="Genomic_DNA"/>
</dbReference>
<dbReference type="EMBL" id="AL773599">
    <property type="status" value="NOT_ANNOTATED_CDS"/>
    <property type="molecule type" value="Genomic_DNA"/>
</dbReference>
<dbReference type="EMBL" id="BC087899">
    <property type="protein sequence ID" value="AAH87899.1"/>
    <property type="molecule type" value="mRNA"/>
</dbReference>
<dbReference type="CCDS" id="CCDS17994.1"/>
<dbReference type="RefSeq" id="NP_780615.2">
    <property type="nucleotide sequence ID" value="NM_175406.3"/>
</dbReference>
<dbReference type="SMR" id="Q80SY3"/>
<dbReference type="BioGRID" id="232395">
    <property type="interactions" value="5"/>
</dbReference>
<dbReference type="FunCoup" id="Q80SY3">
    <property type="interactions" value="518"/>
</dbReference>
<dbReference type="STRING" id="10090.ENSMUSP00000029900"/>
<dbReference type="TCDB" id="3.A.2.2.6">
    <property type="family name" value="the h+- or na+-translocating f-type, v-type and a-type atpase (f-atpase) superfamily"/>
</dbReference>
<dbReference type="iPTMnet" id="Q80SY3"/>
<dbReference type="PhosphoSitePlus" id="Q80SY3"/>
<dbReference type="jPOST" id="Q80SY3"/>
<dbReference type="PaxDb" id="10090-ENSMUSP00000029900"/>
<dbReference type="PeptideAtlas" id="Q80SY3"/>
<dbReference type="ProteomicsDB" id="297906"/>
<dbReference type="Antibodypedia" id="25450">
    <property type="antibodies" value="122 antibodies from 24 providers"/>
</dbReference>
<dbReference type="DNASU" id="242341"/>
<dbReference type="Ensembl" id="ENSMUST00000029900.6">
    <property type="protein sequence ID" value="ENSMUSP00000029900.6"/>
    <property type="gene ID" value="ENSMUSG00000028238.7"/>
</dbReference>
<dbReference type="GeneID" id="242341"/>
<dbReference type="KEGG" id="mmu:242341"/>
<dbReference type="UCSC" id="uc008sch.2">
    <property type="organism name" value="mouse"/>
</dbReference>
<dbReference type="AGR" id="MGI:1924415"/>
<dbReference type="CTD" id="245972"/>
<dbReference type="MGI" id="MGI:1924415">
    <property type="gene designation" value="Atp6v0d2"/>
</dbReference>
<dbReference type="VEuPathDB" id="HostDB:ENSMUSG00000028238"/>
<dbReference type="eggNOG" id="KOG2957">
    <property type="taxonomic scope" value="Eukaryota"/>
</dbReference>
<dbReference type="GeneTree" id="ENSGT00390000002200"/>
<dbReference type="HOGENOM" id="CLU_051277_0_0_1"/>
<dbReference type="InParanoid" id="Q80SY3"/>
<dbReference type="OMA" id="ETLFPTC"/>
<dbReference type="OrthoDB" id="10250083at2759"/>
<dbReference type="PhylomeDB" id="Q80SY3"/>
<dbReference type="TreeFam" id="TF300857"/>
<dbReference type="Reactome" id="R-MMU-1222556">
    <property type="pathway name" value="ROS and RNS production in phagocytes"/>
</dbReference>
<dbReference type="Reactome" id="R-MMU-77387">
    <property type="pathway name" value="Insulin receptor recycling"/>
</dbReference>
<dbReference type="Reactome" id="R-MMU-917977">
    <property type="pathway name" value="Transferrin endocytosis and recycling"/>
</dbReference>
<dbReference type="Reactome" id="R-MMU-9639288">
    <property type="pathway name" value="Amino acids regulate mTORC1"/>
</dbReference>
<dbReference type="Reactome" id="R-MMU-983712">
    <property type="pathway name" value="Ion channel transport"/>
</dbReference>
<dbReference type="BioGRID-ORCS" id="242341">
    <property type="hits" value="1 hit in 79 CRISPR screens"/>
</dbReference>
<dbReference type="ChiTaRS" id="Atp6v0d2">
    <property type="organism name" value="mouse"/>
</dbReference>
<dbReference type="PRO" id="PR:Q80SY3"/>
<dbReference type="Proteomes" id="UP000000589">
    <property type="component" value="Chromosome 4"/>
</dbReference>
<dbReference type="RNAct" id="Q80SY3">
    <property type="molecule type" value="protein"/>
</dbReference>
<dbReference type="Bgee" id="ENSMUSG00000028238">
    <property type="expression patterns" value="Expressed in lumbar dorsal root ganglion and 60 other cell types or tissues"/>
</dbReference>
<dbReference type="ExpressionAtlas" id="Q80SY3">
    <property type="expression patterns" value="baseline and differential"/>
</dbReference>
<dbReference type="GO" id="GO:0016324">
    <property type="term" value="C:apical plasma membrane"/>
    <property type="evidence" value="ECO:0000250"/>
    <property type="project" value="UniProtKB"/>
</dbReference>
<dbReference type="GO" id="GO:0005769">
    <property type="term" value="C:early endosome"/>
    <property type="evidence" value="ECO:0000314"/>
    <property type="project" value="MGI"/>
</dbReference>
<dbReference type="GO" id="GO:0033179">
    <property type="term" value="C:proton-transporting V-type ATPase, V0 domain"/>
    <property type="evidence" value="ECO:0007669"/>
    <property type="project" value="InterPro"/>
</dbReference>
<dbReference type="GO" id="GO:0016471">
    <property type="term" value="C:vacuolar proton-transporting V-type ATPase complex"/>
    <property type="evidence" value="ECO:0007669"/>
    <property type="project" value="Ensembl"/>
</dbReference>
<dbReference type="GO" id="GO:0046961">
    <property type="term" value="F:proton-transporting ATPase activity, rotational mechanism"/>
    <property type="evidence" value="ECO:0007669"/>
    <property type="project" value="InterPro"/>
</dbReference>
<dbReference type="FunFam" id="1.20.1690.10:FF:000001">
    <property type="entry name" value="V-type proton ATPase subunit"/>
    <property type="match status" value="1"/>
</dbReference>
<dbReference type="FunFam" id="1.20.1690.10:FF:000003">
    <property type="entry name" value="V-type proton ATPase subunit"/>
    <property type="match status" value="1"/>
</dbReference>
<dbReference type="Gene3D" id="1.10.132.50">
    <property type="entry name" value="ATP synthase (C/AC39) subunit, domain 3"/>
    <property type="match status" value="1"/>
</dbReference>
<dbReference type="Gene3D" id="1.20.1690.10">
    <property type="entry name" value="V-type ATP synthase subunit C domain"/>
    <property type="match status" value="2"/>
</dbReference>
<dbReference type="InterPro" id="IPR036079">
    <property type="entry name" value="ATPase_csu/dsu_sf"/>
</dbReference>
<dbReference type="InterPro" id="IPR002843">
    <property type="entry name" value="ATPase_V0-cplx_csu/dsu"/>
</dbReference>
<dbReference type="InterPro" id="IPR016727">
    <property type="entry name" value="ATPase_V0-cplx_dsu"/>
</dbReference>
<dbReference type="InterPro" id="IPR035067">
    <property type="entry name" value="V-type_ATPase_csu/dsu"/>
</dbReference>
<dbReference type="InterPro" id="IPR044911">
    <property type="entry name" value="V-type_ATPase_csu/dsu_dom_3"/>
</dbReference>
<dbReference type="PANTHER" id="PTHR11028">
    <property type="entry name" value="VACUOLAR ATP SYNTHASE SUBUNIT AC39"/>
    <property type="match status" value="1"/>
</dbReference>
<dbReference type="Pfam" id="PF01992">
    <property type="entry name" value="vATP-synt_AC39"/>
    <property type="match status" value="1"/>
</dbReference>
<dbReference type="PIRSF" id="PIRSF018497">
    <property type="entry name" value="V-ATP_synth_D"/>
    <property type="match status" value="1"/>
</dbReference>
<dbReference type="SUPFAM" id="SSF103486">
    <property type="entry name" value="V-type ATP synthase subunit C"/>
    <property type="match status" value="1"/>
</dbReference>
<protein>
    <recommendedName>
        <fullName>V-type proton ATPase subunit d 2</fullName>
        <shortName>V-ATPase subunit d 2</shortName>
    </recommendedName>
    <alternativeName>
        <fullName>Osteoclast-specific vacuolar ATP synthase</fullName>
    </alternativeName>
    <alternativeName>
        <fullName>Vacuolar proton pump subunit d 2</fullName>
    </alternativeName>
</protein>
<feature type="chain" id="PRO_0000285658" description="V-type proton ATPase subunit d 2">
    <location>
        <begin position="1"/>
        <end position="350"/>
    </location>
</feature>
<feature type="sequence conflict" description="In Ref. 1; AAN61104 and 2; BAC57951." evidence="6" ref="1 2">
    <original>F</original>
    <variation>L</variation>
    <location>
        <position position="309"/>
    </location>
</feature>
<feature type="sequence conflict" description="In Ref. 4; BAE41545." evidence="6" ref="4">
    <original>Y</original>
    <variation>C</variation>
    <location>
        <position position="315"/>
    </location>
</feature>
<feature type="sequence conflict" description="In Ref. 6; AAH87899." evidence="6" ref="6">
    <original>E</original>
    <variation>G</variation>
    <location>
        <position position="324"/>
    </location>
</feature>
<evidence type="ECO:0000250" key="1">
    <source>
        <dbReference type="UniProtKB" id="P61421"/>
    </source>
</evidence>
<evidence type="ECO:0000269" key="2">
    <source>
    </source>
</evidence>
<evidence type="ECO:0000269" key="3">
    <source>
    </source>
</evidence>
<evidence type="ECO:0000269" key="4">
    <source>
    </source>
</evidence>
<evidence type="ECO:0000269" key="5">
    <source>
    </source>
</evidence>
<evidence type="ECO:0000305" key="6"/>
<reference key="1">
    <citation type="journal article" date="2003" name="J. Biol. Chem.">
        <title>Expression and function of the mouse V-ATPase d subunit isoforms.</title>
        <authorList>
            <person name="Nishi T."/>
            <person name="Kawasaki-Nishi S."/>
            <person name="Forgac M."/>
        </authorList>
    </citation>
    <scope>NUCLEOTIDE SEQUENCE [MRNA]</scope>
    <scope>FUNCTION</scope>
    <scope>TISSUE SPECIFICITY</scope>
    <scope>DEVELOPMENTAL STAGE</scope>
    <source>
        <strain>C57BL/6J</strain>
    </source>
</reference>
<reference key="2">
    <citation type="journal article" date="2003" name="Gene">
        <title>Diversity of mouse proton-translocating ATPase: presence of multiple isoforms of the C, d and G subunits.</title>
        <authorList>
            <person name="Sun-Wada G.-H."/>
            <person name="Yoshimizu T."/>
            <person name="Imai-Senga Y."/>
            <person name="Wada Y."/>
            <person name="Futai M."/>
        </authorList>
    </citation>
    <scope>NUCLEOTIDE SEQUENCE [MRNA]</scope>
    <scope>TISSUE SPECIFICITY</scope>
</reference>
<reference key="3">
    <citation type="journal article" date="2006" name="Nat. Med.">
        <title>v-ATPase V0 subunit d2-deficient mice exhibit impaired osteoclast fusion and increased bone formation.</title>
        <authorList>
            <person name="Lee S.-H."/>
            <person name="Rho J."/>
            <person name="Jeong D."/>
            <person name="Sul J.-Y."/>
            <person name="Kim T."/>
            <person name="Kim N."/>
            <person name="Kang J.-S."/>
            <person name="Miyamoto T."/>
            <person name="Suda T."/>
            <person name="Lee S.K."/>
            <person name="Pignolo R.J."/>
            <person name="Koczon-Jaremko B."/>
            <person name="Lorenzo J."/>
            <person name="Choi Y."/>
        </authorList>
    </citation>
    <scope>NUCLEOTIDE SEQUENCE [MRNA]</scope>
    <scope>FUNCTION</scope>
    <scope>TISSUE SPECIFICITY</scope>
    <source>
        <strain>C57BL/6J</strain>
    </source>
</reference>
<reference key="4">
    <citation type="journal article" date="2005" name="Science">
        <title>The transcriptional landscape of the mammalian genome.</title>
        <authorList>
            <person name="Carninci P."/>
            <person name="Kasukawa T."/>
            <person name="Katayama S."/>
            <person name="Gough J."/>
            <person name="Frith M.C."/>
            <person name="Maeda N."/>
            <person name="Oyama R."/>
            <person name="Ravasi T."/>
            <person name="Lenhard B."/>
            <person name="Wells C."/>
            <person name="Kodzius R."/>
            <person name="Shimokawa K."/>
            <person name="Bajic V.B."/>
            <person name="Brenner S.E."/>
            <person name="Batalov S."/>
            <person name="Forrest A.R."/>
            <person name="Zavolan M."/>
            <person name="Davis M.J."/>
            <person name="Wilming L.G."/>
            <person name="Aidinis V."/>
            <person name="Allen J.E."/>
            <person name="Ambesi-Impiombato A."/>
            <person name="Apweiler R."/>
            <person name="Aturaliya R.N."/>
            <person name="Bailey T.L."/>
            <person name="Bansal M."/>
            <person name="Baxter L."/>
            <person name="Beisel K.W."/>
            <person name="Bersano T."/>
            <person name="Bono H."/>
            <person name="Chalk A.M."/>
            <person name="Chiu K.P."/>
            <person name="Choudhary V."/>
            <person name="Christoffels A."/>
            <person name="Clutterbuck D.R."/>
            <person name="Crowe M.L."/>
            <person name="Dalla E."/>
            <person name="Dalrymple B.P."/>
            <person name="de Bono B."/>
            <person name="Della Gatta G."/>
            <person name="di Bernardo D."/>
            <person name="Down T."/>
            <person name="Engstrom P."/>
            <person name="Fagiolini M."/>
            <person name="Faulkner G."/>
            <person name="Fletcher C.F."/>
            <person name="Fukushima T."/>
            <person name="Furuno M."/>
            <person name="Futaki S."/>
            <person name="Gariboldi M."/>
            <person name="Georgii-Hemming P."/>
            <person name="Gingeras T.R."/>
            <person name="Gojobori T."/>
            <person name="Green R.E."/>
            <person name="Gustincich S."/>
            <person name="Harbers M."/>
            <person name="Hayashi Y."/>
            <person name="Hensch T.K."/>
            <person name="Hirokawa N."/>
            <person name="Hill D."/>
            <person name="Huminiecki L."/>
            <person name="Iacono M."/>
            <person name="Ikeo K."/>
            <person name="Iwama A."/>
            <person name="Ishikawa T."/>
            <person name="Jakt M."/>
            <person name="Kanapin A."/>
            <person name="Katoh M."/>
            <person name="Kawasawa Y."/>
            <person name="Kelso J."/>
            <person name="Kitamura H."/>
            <person name="Kitano H."/>
            <person name="Kollias G."/>
            <person name="Krishnan S.P."/>
            <person name="Kruger A."/>
            <person name="Kummerfeld S.K."/>
            <person name="Kurochkin I.V."/>
            <person name="Lareau L.F."/>
            <person name="Lazarevic D."/>
            <person name="Lipovich L."/>
            <person name="Liu J."/>
            <person name="Liuni S."/>
            <person name="McWilliam S."/>
            <person name="Madan Babu M."/>
            <person name="Madera M."/>
            <person name="Marchionni L."/>
            <person name="Matsuda H."/>
            <person name="Matsuzawa S."/>
            <person name="Miki H."/>
            <person name="Mignone F."/>
            <person name="Miyake S."/>
            <person name="Morris K."/>
            <person name="Mottagui-Tabar S."/>
            <person name="Mulder N."/>
            <person name="Nakano N."/>
            <person name="Nakauchi H."/>
            <person name="Ng P."/>
            <person name="Nilsson R."/>
            <person name="Nishiguchi S."/>
            <person name="Nishikawa S."/>
            <person name="Nori F."/>
            <person name="Ohara O."/>
            <person name="Okazaki Y."/>
            <person name="Orlando V."/>
            <person name="Pang K.C."/>
            <person name="Pavan W.J."/>
            <person name="Pavesi G."/>
            <person name="Pesole G."/>
            <person name="Petrovsky N."/>
            <person name="Piazza S."/>
            <person name="Reed J."/>
            <person name="Reid J.F."/>
            <person name="Ring B.Z."/>
            <person name="Ringwald M."/>
            <person name="Rost B."/>
            <person name="Ruan Y."/>
            <person name="Salzberg S.L."/>
            <person name="Sandelin A."/>
            <person name="Schneider C."/>
            <person name="Schoenbach C."/>
            <person name="Sekiguchi K."/>
            <person name="Semple C.A."/>
            <person name="Seno S."/>
            <person name="Sessa L."/>
            <person name="Sheng Y."/>
            <person name="Shibata Y."/>
            <person name="Shimada H."/>
            <person name="Shimada K."/>
            <person name="Silva D."/>
            <person name="Sinclair B."/>
            <person name="Sperling S."/>
            <person name="Stupka E."/>
            <person name="Sugiura K."/>
            <person name="Sultana R."/>
            <person name="Takenaka Y."/>
            <person name="Taki K."/>
            <person name="Tammoja K."/>
            <person name="Tan S.L."/>
            <person name="Tang S."/>
            <person name="Taylor M.S."/>
            <person name="Tegner J."/>
            <person name="Teichmann S.A."/>
            <person name="Ueda H.R."/>
            <person name="van Nimwegen E."/>
            <person name="Verardo R."/>
            <person name="Wei C.L."/>
            <person name="Yagi K."/>
            <person name="Yamanishi H."/>
            <person name="Zabarovsky E."/>
            <person name="Zhu S."/>
            <person name="Zimmer A."/>
            <person name="Hide W."/>
            <person name="Bult C."/>
            <person name="Grimmond S.M."/>
            <person name="Teasdale R.D."/>
            <person name="Liu E.T."/>
            <person name="Brusic V."/>
            <person name="Quackenbush J."/>
            <person name="Wahlestedt C."/>
            <person name="Mattick J.S."/>
            <person name="Hume D.A."/>
            <person name="Kai C."/>
            <person name="Sasaki D."/>
            <person name="Tomaru Y."/>
            <person name="Fukuda S."/>
            <person name="Kanamori-Katayama M."/>
            <person name="Suzuki M."/>
            <person name="Aoki J."/>
            <person name="Arakawa T."/>
            <person name="Iida J."/>
            <person name="Imamura K."/>
            <person name="Itoh M."/>
            <person name="Kato T."/>
            <person name="Kawaji H."/>
            <person name="Kawagashira N."/>
            <person name="Kawashima T."/>
            <person name="Kojima M."/>
            <person name="Kondo S."/>
            <person name="Konno H."/>
            <person name="Nakano K."/>
            <person name="Ninomiya N."/>
            <person name="Nishio T."/>
            <person name="Okada M."/>
            <person name="Plessy C."/>
            <person name="Shibata K."/>
            <person name="Shiraki T."/>
            <person name="Suzuki S."/>
            <person name="Tagami M."/>
            <person name="Waki K."/>
            <person name="Watahiki A."/>
            <person name="Okamura-Oho Y."/>
            <person name="Suzuki H."/>
            <person name="Kawai J."/>
            <person name="Hayashizaki Y."/>
        </authorList>
    </citation>
    <scope>NUCLEOTIDE SEQUENCE [LARGE SCALE MRNA]</scope>
    <source>
        <strain>C57BL/6J</strain>
        <strain>NOD</strain>
        <tissue>Placenta</tissue>
    </source>
</reference>
<reference key="5">
    <citation type="journal article" date="2009" name="PLoS Biol.">
        <title>Lineage-specific biology revealed by a finished genome assembly of the mouse.</title>
        <authorList>
            <person name="Church D.M."/>
            <person name="Goodstadt L."/>
            <person name="Hillier L.W."/>
            <person name="Zody M.C."/>
            <person name="Goldstein S."/>
            <person name="She X."/>
            <person name="Bult C.J."/>
            <person name="Agarwala R."/>
            <person name="Cherry J.L."/>
            <person name="DiCuccio M."/>
            <person name="Hlavina W."/>
            <person name="Kapustin Y."/>
            <person name="Meric P."/>
            <person name="Maglott D."/>
            <person name="Birtle Z."/>
            <person name="Marques A.C."/>
            <person name="Graves T."/>
            <person name="Zhou S."/>
            <person name="Teague B."/>
            <person name="Potamousis K."/>
            <person name="Churas C."/>
            <person name="Place M."/>
            <person name="Herschleb J."/>
            <person name="Runnheim R."/>
            <person name="Forrest D."/>
            <person name="Amos-Landgraf J."/>
            <person name="Schwartz D.C."/>
            <person name="Cheng Z."/>
            <person name="Lindblad-Toh K."/>
            <person name="Eichler E.E."/>
            <person name="Ponting C.P."/>
        </authorList>
    </citation>
    <scope>NUCLEOTIDE SEQUENCE [LARGE SCALE GENOMIC DNA]</scope>
    <source>
        <strain>C57BL/6J</strain>
    </source>
</reference>
<reference key="6">
    <citation type="journal article" date="2004" name="Genome Res.">
        <title>The status, quality, and expansion of the NIH full-length cDNA project: the Mammalian Gene Collection (MGC).</title>
        <authorList>
            <consortium name="The MGC Project Team"/>
        </authorList>
    </citation>
    <scope>NUCLEOTIDE SEQUENCE [LARGE SCALE MRNA]</scope>
    <source>
        <tissue>Molar</tissue>
    </source>
</reference>
<reference key="7">
    <citation type="journal article" date="2024" name="Nat. Commun.">
        <title>TM4SF19-mediated control of lysosomal activity in macrophages contributes to obesity-induced inflammation and metabolic dysfunction.</title>
        <authorList>
            <person name="Choi C."/>
            <person name="Jeong Y.L."/>
            <person name="Park K.M."/>
            <person name="Kim M."/>
            <person name="Kim S."/>
            <person name="Jo H."/>
            <person name="Lee S."/>
            <person name="Kim H."/>
            <person name="Choi G."/>
            <person name="Choi Y.H."/>
            <person name="Seong J.K."/>
            <person name="Namgoong S."/>
            <person name="Chung Y."/>
            <person name="Jung Y.S."/>
            <person name="Granneman J.G."/>
            <person name="Hyun Y.M."/>
            <person name="Kim J.K."/>
            <person name="Lee Y.H."/>
        </authorList>
    </citation>
    <scope>INTERACTION WITH TM4SF19</scope>
</reference>
<accession>Q80SY3</accession>
<accession>Q3TDQ6</accession>
<accession>Q5I0V5</accession>
<accession>Q8BTL3</accession>
<accession>Q8BW16</accession>
<comment type="function">
    <text evidence="1 3 4">Subunit of the V0 complex of vacuolar(H+)-ATPase (V-ATPase), a multisubunit enzyme composed of a peripheral complex (V1) that hydrolyzes ATP and a membrane integral complex (V0) that translocates protons. V-ATPase is responsible for acidifying and maintaining the pH of intracellular compartments and in some cell types, is targeted to the plasma membrane, where it is responsible for acidifying the extracellular environment (By similarity). May play a role in coupling of proton transport and ATP hydrolysis (PubMed:12963731). Regulator of osteoclast fusion and bone formation (PubMed:17128270).</text>
</comment>
<comment type="subunit">
    <text evidence="1 5">V-ATPase is a heteromultimeric enzyme made up of two complexes: the ATP-hydrolytic V1 complex and the proton translocation V0 complex. The V1 complex consists of three catalytic AB heterodimers that form a heterohexamer, three peripheral stalks each consisting of EG heterodimers, one central rotor including subunits D and F, and the regulatory subunits C and H. The proton translocation complex V0 consists of the proton transport subunit a, a ring of proteolipid subunits c9c'', rotary subunit d, subunits e and f, and the accessory subunits ATP6AP1/Ac45 and ATP6AP2/PRR. Interacts with TM4SF19; this interaction inhibits V1-V0 complex assembly (PubMed:38555350).</text>
</comment>
<comment type="tissue specificity">
    <text evidence="2 3 4">Predominantly expressed in the kidney. Also expressed in the lung, testis, skeletal muscle and heart. Upr-egulated during osteoclast differentiation and is most abundant in mature osteoclasts.</text>
</comment>
<comment type="developmental stage">
    <text evidence="3">Strongly expressed at day 7 followed by a disappearance and a gradual recovery to original levels by day 17.</text>
</comment>
<comment type="similarity">
    <text evidence="6">Belongs to the V-ATPase V0D/AC39 subunit family.</text>
</comment>
<sequence>MLETAELYFNVDHGYLEGLVRGCKASLLTQQDYVNLVQCETLEDLKIHLQTTDYGNFLANETNPLTVSKIDTEMRKKLCREFDYFRNHSLEPLSTFLTYMTCSYMIDNIILLMNGALQKKSVKEVLAKCHPLGRFTEMEAVNIAETPSDLFKAVLVETPLAPFFQDCMSENTLDELNIELLRNKLYKSYLEAFYKFCKDHGDVTADVMCPILEFEADRRALIITLNSFGTELSKEDRETLFPTCGRLYPEGLRLLAQAEDFEQMKRVADNYGVYKPLFDAVGGSGGKTLEDVFYEREVQMNVLAFNRQFHYGVFYAYVKLKEQEMRNIVWIAECISQRHRTKINSYIPIL</sequence>